<reference key="1">
    <citation type="journal article" date="2000" name="Nature">
        <title>Sequence and analysis of chromosome 1 of the plant Arabidopsis thaliana.</title>
        <authorList>
            <person name="Theologis A."/>
            <person name="Ecker J.R."/>
            <person name="Palm C.J."/>
            <person name="Federspiel N.A."/>
            <person name="Kaul S."/>
            <person name="White O."/>
            <person name="Alonso J."/>
            <person name="Altafi H."/>
            <person name="Araujo R."/>
            <person name="Bowman C.L."/>
            <person name="Brooks S.Y."/>
            <person name="Buehler E."/>
            <person name="Chan A."/>
            <person name="Chao Q."/>
            <person name="Chen H."/>
            <person name="Cheuk R.F."/>
            <person name="Chin C.W."/>
            <person name="Chung M.K."/>
            <person name="Conn L."/>
            <person name="Conway A.B."/>
            <person name="Conway A.R."/>
            <person name="Creasy T.H."/>
            <person name="Dewar K."/>
            <person name="Dunn P."/>
            <person name="Etgu P."/>
            <person name="Feldblyum T.V."/>
            <person name="Feng J.-D."/>
            <person name="Fong B."/>
            <person name="Fujii C.Y."/>
            <person name="Gill J.E."/>
            <person name="Goldsmith A.D."/>
            <person name="Haas B."/>
            <person name="Hansen N.F."/>
            <person name="Hughes B."/>
            <person name="Huizar L."/>
            <person name="Hunter J.L."/>
            <person name="Jenkins J."/>
            <person name="Johnson-Hopson C."/>
            <person name="Khan S."/>
            <person name="Khaykin E."/>
            <person name="Kim C.J."/>
            <person name="Koo H.L."/>
            <person name="Kremenetskaia I."/>
            <person name="Kurtz D.B."/>
            <person name="Kwan A."/>
            <person name="Lam B."/>
            <person name="Langin-Hooper S."/>
            <person name="Lee A."/>
            <person name="Lee J.M."/>
            <person name="Lenz C.A."/>
            <person name="Li J.H."/>
            <person name="Li Y.-P."/>
            <person name="Lin X."/>
            <person name="Liu S.X."/>
            <person name="Liu Z.A."/>
            <person name="Luros J.S."/>
            <person name="Maiti R."/>
            <person name="Marziali A."/>
            <person name="Militscher J."/>
            <person name="Miranda M."/>
            <person name="Nguyen M."/>
            <person name="Nierman W.C."/>
            <person name="Osborne B.I."/>
            <person name="Pai G."/>
            <person name="Peterson J."/>
            <person name="Pham P.K."/>
            <person name="Rizzo M."/>
            <person name="Rooney T."/>
            <person name="Rowley D."/>
            <person name="Sakano H."/>
            <person name="Salzberg S.L."/>
            <person name="Schwartz J.R."/>
            <person name="Shinn P."/>
            <person name="Southwick A.M."/>
            <person name="Sun H."/>
            <person name="Tallon L.J."/>
            <person name="Tambunga G."/>
            <person name="Toriumi M.J."/>
            <person name="Town C.D."/>
            <person name="Utterback T."/>
            <person name="Van Aken S."/>
            <person name="Vaysberg M."/>
            <person name="Vysotskaia V.S."/>
            <person name="Walker M."/>
            <person name="Wu D."/>
            <person name="Yu G."/>
            <person name="Fraser C.M."/>
            <person name="Venter J.C."/>
            <person name="Davis R.W."/>
        </authorList>
    </citation>
    <scope>NUCLEOTIDE SEQUENCE [LARGE SCALE GENOMIC DNA]</scope>
    <source>
        <strain>cv. Columbia</strain>
    </source>
</reference>
<reference key="2">
    <citation type="journal article" date="2017" name="Plant J.">
        <title>Araport11: a complete reannotation of the Arabidopsis thaliana reference genome.</title>
        <authorList>
            <person name="Cheng C.Y."/>
            <person name="Krishnakumar V."/>
            <person name="Chan A.P."/>
            <person name="Thibaud-Nissen F."/>
            <person name="Schobel S."/>
            <person name="Town C.D."/>
        </authorList>
    </citation>
    <scope>GENOME REANNOTATION</scope>
    <source>
        <strain>cv. Columbia</strain>
    </source>
</reference>
<reference key="3">
    <citation type="journal article" date="2003" name="Science">
        <title>Empirical analysis of transcriptional activity in the Arabidopsis genome.</title>
        <authorList>
            <person name="Yamada K."/>
            <person name="Lim J."/>
            <person name="Dale J.M."/>
            <person name="Chen H."/>
            <person name="Shinn P."/>
            <person name="Palm C.J."/>
            <person name="Southwick A.M."/>
            <person name="Wu H.C."/>
            <person name="Kim C.J."/>
            <person name="Nguyen M."/>
            <person name="Pham P.K."/>
            <person name="Cheuk R.F."/>
            <person name="Karlin-Newmann G."/>
            <person name="Liu S.X."/>
            <person name="Lam B."/>
            <person name="Sakano H."/>
            <person name="Wu T."/>
            <person name="Yu G."/>
            <person name="Miranda M."/>
            <person name="Quach H.L."/>
            <person name="Tripp M."/>
            <person name="Chang C.H."/>
            <person name="Lee J.M."/>
            <person name="Toriumi M.J."/>
            <person name="Chan M.M."/>
            <person name="Tang C.C."/>
            <person name="Onodera C.S."/>
            <person name="Deng J.M."/>
            <person name="Akiyama K."/>
            <person name="Ansari Y."/>
            <person name="Arakawa T."/>
            <person name="Banh J."/>
            <person name="Banno F."/>
            <person name="Bowser L."/>
            <person name="Brooks S.Y."/>
            <person name="Carninci P."/>
            <person name="Chao Q."/>
            <person name="Choy N."/>
            <person name="Enju A."/>
            <person name="Goldsmith A.D."/>
            <person name="Gurjal M."/>
            <person name="Hansen N.F."/>
            <person name="Hayashizaki Y."/>
            <person name="Johnson-Hopson C."/>
            <person name="Hsuan V.W."/>
            <person name="Iida K."/>
            <person name="Karnes M."/>
            <person name="Khan S."/>
            <person name="Koesema E."/>
            <person name="Ishida J."/>
            <person name="Jiang P.X."/>
            <person name="Jones T."/>
            <person name="Kawai J."/>
            <person name="Kamiya A."/>
            <person name="Meyers C."/>
            <person name="Nakajima M."/>
            <person name="Narusaka M."/>
            <person name="Seki M."/>
            <person name="Sakurai T."/>
            <person name="Satou M."/>
            <person name="Tamse R."/>
            <person name="Vaysberg M."/>
            <person name="Wallender E.K."/>
            <person name="Wong C."/>
            <person name="Yamamura Y."/>
            <person name="Yuan S."/>
            <person name="Shinozaki K."/>
            <person name="Davis R.W."/>
            <person name="Theologis A."/>
            <person name="Ecker J.R."/>
        </authorList>
    </citation>
    <scope>NUCLEOTIDE SEQUENCE [LARGE SCALE MRNA] (ISOFORM 1)</scope>
    <source>
        <strain>cv. Columbia</strain>
    </source>
</reference>
<reference key="4">
    <citation type="journal article" date="2009" name="DNA Res.">
        <title>Analysis of multiple occurrences of alternative splicing events in Arabidopsis thaliana using novel sequenced full-length cDNAs.</title>
        <authorList>
            <person name="Iida K."/>
            <person name="Fukami-Kobayashi K."/>
            <person name="Toyoda A."/>
            <person name="Sakaki Y."/>
            <person name="Kobayashi M."/>
            <person name="Seki M."/>
            <person name="Shinozaki K."/>
        </authorList>
    </citation>
    <scope>NUCLEOTIDE SEQUENCE [LARGE SCALE MRNA] (ISOFORM 2)</scope>
    <source>
        <strain>cv. Columbia</strain>
        <tissue>Root</tissue>
    </source>
</reference>
<reference key="5">
    <citation type="submission" date="2002-03" db="EMBL/GenBank/DDBJ databases">
        <title>Full-length cDNA from Arabidopsis thaliana.</title>
        <authorList>
            <person name="Brover V.V."/>
            <person name="Troukhan M.E."/>
            <person name="Alexandrov N.A."/>
            <person name="Lu Y.-P."/>
            <person name="Flavell R.B."/>
            <person name="Feldmann K.A."/>
        </authorList>
    </citation>
    <scope>NUCLEOTIDE SEQUENCE [LARGE SCALE MRNA] (ISOFORM 1)</scope>
</reference>
<reference key="6">
    <citation type="submission" date="2005-03" db="EMBL/GenBank/DDBJ databases">
        <title>Large-scale analysis of RIKEN Arabidopsis full-length (RAFL) cDNAs.</title>
        <authorList>
            <person name="Totoki Y."/>
            <person name="Seki M."/>
            <person name="Ishida J."/>
            <person name="Nakajima M."/>
            <person name="Enju A."/>
            <person name="Kamiya A."/>
            <person name="Narusaka M."/>
            <person name="Shin-i T."/>
            <person name="Nakagawa M."/>
            <person name="Sakamoto N."/>
            <person name="Oishi K."/>
            <person name="Kohara Y."/>
            <person name="Kobayashi M."/>
            <person name="Toyoda A."/>
            <person name="Sakaki Y."/>
            <person name="Sakurai T."/>
            <person name="Iida K."/>
            <person name="Akiyama K."/>
            <person name="Satou M."/>
            <person name="Toyoda T."/>
            <person name="Konagaya A."/>
            <person name="Carninci P."/>
            <person name="Kawai J."/>
            <person name="Hayashizaki Y."/>
            <person name="Shinozaki K."/>
        </authorList>
    </citation>
    <scope>NUCLEOTIDE SEQUENCE [LARGE SCALE MRNA] OF 190-421</scope>
    <source>
        <strain>cv. Columbia</strain>
    </source>
</reference>
<reference key="7">
    <citation type="journal article" date="2013" name="Curr. Opin. Plant Biol.">
        <title>Plant sphingolipids: function follows form.</title>
        <authorList>
            <person name="Markham J.E."/>
            <person name="Lynch D.V."/>
            <person name="Napier J.A."/>
            <person name="Dunn T.M."/>
            <person name="Cahoon E.B."/>
        </authorList>
    </citation>
    <scope>REVIEW ON SPHINGOLIPIDS</scope>
</reference>
<reference key="8">
    <citation type="journal article" date="2019" name="Nat. Plants">
        <title>Sphingolipid biosynthesis modulates plasmodesmal ultrastructure and phloem unloading.</title>
        <authorList>
            <person name="Yan D."/>
            <person name="Yadav S.R."/>
            <person name="Paterlini A."/>
            <person name="Nicolas W.J."/>
            <person name="Petit J.D."/>
            <person name="Brocard L."/>
            <person name="Belevich I."/>
            <person name="Grison M.S."/>
            <person name="Vaten A."/>
            <person name="Karami L."/>
            <person name="El-Showk S."/>
            <person name="Lee J.Y."/>
            <person name="Murawska G.M."/>
            <person name="Mortimer J."/>
            <person name="Knoblauch M."/>
            <person name="Jokitalo E."/>
            <person name="Markham J.E."/>
            <person name="Bayer E.M."/>
            <person name="Helariutta Y."/>
        </authorList>
    </citation>
    <scope>FUNCTION</scope>
    <scope>DISRUPTION PHENOTYPE</scope>
    <scope>PATHWAY</scope>
    <source>
        <strain>cv. C24</strain>
        <strain>cv. Columbia</strain>
    </source>
</reference>
<reference key="9">
    <citation type="journal article" date="2020" name="Trends Plant Sci.">
        <title>Synthesis and function of complex sphingolipid glycosylation.</title>
        <authorList>
            <person name="Mortimer J.C."/>
            <person name="Scheller H.V."/>
        </authorList>
    </citation>
    <scope>REVIEW</scope>
</reference>
<keyword id="KW-0025">Alternative splicing</keyword>
<keyword id="KW-0444">Lipid biosynthesis</keyword>
<keyword id="KW-0443">Lipid metabolism</keyword>
<keyword id="KW-0472">Membrane</keyword>
<keyword id="KW-1185">Reference proteome</keyword>
<keyword id="KW-0746">Sphingolipid metabolism</keyword>
<keyword id="KW-0808">Transferase</keyword>
<keyword id="KW-0812">Transmembrane</keyword>
<keyword id="KW-1133">Transmembrane helix</keyword>
<feature type="chain" id="PRO_0000452150" description="Protein PHLOEM UNLOADING MODULATOR">
    <location>
        <begin position="1"/>
        <end position="421"/>
    </location>
</feature>
<feature type="transmembrane region" description="Helical" evidence="1">
    <location>
        <begin position="30"/>
        <end position="50"/>
    </location>
</feature>
<feature type="transmembrane region" description="Helical" evidence="1">
    <location>
        <begin position="60"/>
        <end position="80"/>
    </location>
</feature>
<feature type="transmembrane region" description="Helical" evidence="1">
    <location>
        <begin position="124"/>
        <end position="144"/>
    </location>
</feature>
<feature type="transmembrane region" description="Helical" evidence="1">
    <location>
        <begin position="158"/>
        <end position="178"/>
    </location>
</feature>
<feature type="transmembrane region" description="Helical" evidence="1">
    <location>
        <begin position="286"/>
        <end position="306"/>
    </location>
</feature>
<feature type="transmembrane region" description="Helical" evidence="1">
    <location>
        <begin position="323"/>
        <end position="343"/>
    </location>
</feature>
<feature type="transmembrane region" description="Helical" evidence="1">
    <location>
        <begin position="397"/>
        <end position="417"/>
    </location>
</feature>
<feature type="splice variant" id="VSP_060914" description="In isoform 2.">
    <location>
        <begin position="94"/>
        <end position="376"/>
    </location>
</feature>
<feature type="sequence conflict" description="In Ref. 5; AAM63357." evidence="4" ref="5">
    <original>V</original>
    <variation>A</variation>
    <location>
        <position position="15"/>
    </location>
</feature>
<feature type="sequence conflict" description="In Ref. 5; AAM63357." evidence="4" ref="5">
    <original>M</original>
    <variation>I</variation>
    <location>
        <position position="31"/>
    </location>
</feature>
<feature type="sequence conflict" description="In Ref. 5; AAM63357." evidence="4" ref="5">
    <original>S</original>
    <variation>N</variation>
    <location>
        <position position="112"/>
    </location>
</feature>
<feature type="sequence conflict" description="In Ref. 5; AAM63357." evidence="4" ref="5">
    <original>A</original>
    <variation>T</variation>
    <location>
        <position position="213"/>
    </location>
</feature>
<feature type="sequence conflict" description="In Ref. 5; AAM63357." evidence="4" ref="5">
    <original>S</original>
    <variation>N</variation>
    <location>
        <position position="246"/>
    </location>
</feature>
<feature type="sequence conflict" description="In Ref. 5; AAM63357." evidence="4" ref="5">
    <original>S</original>
    <variation>P</variation>
    <location>
        <position position="257"/>
    </location>
</feature>
<proteinExistence type="evidence at transcript level"/>
<accession>Q9XIG2</accession>
<accession>C0Z2F1</accession>
<accession>Q56YW4</accession>
<accession>Q8LD82</accession>
<dbReference type="EC" id="2.7.8.-" evidence="2"/>
<dbReference type="EMBL" id="AC007203">
    <property type="protein sequence ID" value="AAD39274.1"/>
    <property type="molecule type" value="Genomic_DNA"/>
</dbReference>
<dbReference type="EMBL" id="CP002684">
    <property type="protein sequence ID" value="AEE31971.1"/>
    <property type="molecule type" value="Genomic_DNA"/>
</dbReference>
<dbReference type="EMBL" id="AY090374">
    <property type="protein sequence ID" value="AAL91277.1"/>
    <property type="molecule type" value="mRNA"/>
</dbReference>
<dbReference type="EMBL" id="AK318765">
    <property type="protein sequence ID" value="BAH56880.1"/>
    <property type="molecule type" value="mRNA"/>
</dbReference>
<dbReference type="EMBL" id="AY086152">
    <property type="protein sequence ID" value="AAM63357.1"/>
    <property type="molecule type" value="mRNA"/>
</dbReference>
<dbReference type="EMBL" id="AK221206">
    <property type="protein sequence ID" value="BAD93747.1"/>
    <property type="molecule type" value="mRNA"/>
</dbReference>
<dbReference type="PIR" id="C96499">
    <property type="entry name" value="C96499"/>
</dbReference>
<dbReference type="RefSeq" id="NP_564484.1">
    <molecule id="Q9XIG2-1"/>
    <property type="nucleotide sequence ID" value="NM_103483.3"/>
</dbReference>
<dbReference type="SMR" id="Q9XIG2"/>
<dbReference type="FunCoup" id="Q9XIG2">
    <property type="interactions" value="1499"/>
</dbReference>
<dbReference type="STRING" id="3702.Q9XIG2"/>
<dbReference type="PaxDb" id="3702-AT1G43580.1"/>
<dbReference type="ProteomicsDB" id="187975"/>
<dbReference type="EnsemblPlants" id="AT1G43580.1">
    <molecule id="Q9XIG2-1"/>
    <property type="protein sequence ID" value="AT1G43580.1"/>
    <property type="gene ID" value="AT1G43580"/>
</dbReference>
<dbReference type="GeneID" id="840942"/>
<dbReference type="Gramene" id="AT1G43580.1">
    <molecule id="Q9XIG2-1"/>
    <property type="protein sequence ID" value="AT1G43580.1"/>
    <property type="gene ID" value="AT1G43580"/>
</dbReference>
<dbReference type="KEGG" id="ath:AT1G43580"/>
<dbReference type="Araport" id="AT1G43580"/>
<dbReference type="TAIR" id="AT1G43580"/>
<dbReference type="eggNOG" id="KOG3058">
    <property type="taxonomic scope" value="Eukaryota"/>
</dbReference>
<dbReference type="HOGENOM" id="CLU_055733_0_0_1"/>
<dbReference type="InParanoid" id="Q9XIG2"/>
<dbReference type="OMA" id="SYRHWSA"/>
<dbReference type="PhylomeDB" id="Q9XIG2"/>
<dbReference type="PRO" id="PR:Q9XIG2"/>
<dbReference type="Proteomes" id="UP000006548">
    <property type="component" value="Chromosome 1"/>
</dbReference>
<dbReference type="ExpressionAtlas" id="Q9XIG2">
    <property type="expression patterns" value="baseline and differential"/>
</dbReference>
<dbReference type="GO" id="GO:0016020">
    <property type="term" value="C:membrane"/>
    <property type="evidence" value="ECO:0007669"/>
    <property type="project" value="UniProtKB-SubCell"/>
</dbReference>
<dbReference type="GO" id="GO:0009506">
    <property type="term" value="C:plasmodesma"/>
    <property type="evidence" value="ECO:0007005"/>
    <property type="project" value="TAIR"/>
</dbReference>
<dbReference type="GO" id="GO:0016780">
    <property type="term" value="F:phosphotransferase activity, for other substituted phosphate groups"/>
    <property type="evidence" value="ECO:0007669"/>
    <property type="project" value="InterPro"/>
</dbReference>
<dbReference type="GO" id="GO:0009663">
    <property type="term" value="P:plasmodesma organization"/>
    <property type="evidence" value="ECO:0000315"/>
    <property type="project" value="UniProtKB"/>
</dbReference>
<dbReference type="GO" id="GO:0010497">
    <property type="term" value="P:plasmodesmata-mediated intercellular transport"/>
    <property type="evidence" value="ECO:0000315"/>
    <property type="project" value="UniProtKB"/>
</dbReference>
<dbReference type="GO" id="GO:0030148">
    <property type="term" value="P:sphingolipid biosynthetic process"/>
    <property type="evidence" value="ECO:0000315"/>
    <property type="project" value="UniProtKB"/>
</dbReference>
<dbReference type="GO" id="GO:0042761">
    <property type="term" value="P:very long-chain fatty acid biosynthetic process"/>
    <property type="evidence" value="ECO:0000315"/>
    <property type="project" value="UniProtKB"/>
</dbReference>
<dbReference type="InterPro" id="IPR045221">
    <property type="entry name" value="Sphingomyelin_synth-like"/>
</dbReference>
<dbReference type="InterPro" id="IPR025749">
    <property type="entry name" value="Sphingomyelin_synth-like_dom"/>
</dbReference>
<dbReference type="PANTHER" id="PTHR21290:SF25">
    <property type="entry name" value="SPHINGOMYELIN SYNTHASE-RELATED PROTEIN 1"/>
    <property type="match status" value="1"/>
</dbReference>
<dbReference type="PANTHER" id="PTHR21290">
    <property type="entry name" value="SPHINGOMYELIN SYNTHETASE"/>
    <property type="match status" value="1"/>
</dbReference>
<dbReference type="Pfam" id="PF14360">
    <property type="entry name" value="PAP2_C"/>
    <property type="match status" value="1"/>
</dbReference>
<evidence type="ECO:0000255" key="1"/>
<evidence type="ECO:0000269" key="2">
    <source>
    </source>
</evidence>
<evidence type="ECO:0000303" key="3">
    <source>
    </source>
</evidence>
<evidence type="ECO:0000305" key="4"/>
<evidence type="ECO:0000312" key="5">
    <source>
        <dbReference type="Araport" id="AT1G43580"/>
    </source>
</evidence>
<evidence type="ECO:0000312" key="6">
    <source>
        <dbReference type="EMBL" id="AAD39274.1"/>
    </source>
</evidence>
<organism>
    <name type="scientific">Arabidopsis thaliana</name>
    <name type="common">Mouse-ear cress</name>
    <dbReference type="NCBI Taxonomy" id="3702"/>
    <lineage>
        <taxon>Eukaryota</taxon>
        <taxon>Viridiplantae</taxon>
        <taxon>Streptophyta</taxon>
        <taxon>Embryophyta</taxon>
        <taxon>Tracheophyta</taxon>
        <taxon>Spermatophyta</taxon>
        <taxon>Magnoliopsida</taxon>
        <taxon>eudicotyledons</taxon>
        <taxon>Gunneridae</taxon>
        <taxon>Pentapetalae</taxon>
        <taxon>rosids</taxon>
        <taxon>malvids</taxon>
        <taxon>Brassicales</taxon>
        <taxon>Brassicaceae</taxon>
        <taxon>Camelineae</taxon>
        <taxon>Arabidopsis</taxon>
    </lineage>
</organism>
<sequence>MTKGGLGIAAMSYVVIDYMRYVSPVWHSRLMPVLWSVLAIAVVTRVLFYKHWSKELRAAIPFLGSIVFLLCALLFEALCVRSVTAVLGLDWHRETPPLPDTGQWFLLALNESLPGTLVEILRAHIIGLHHFLMLFIMLGFSVVFDSVKAPGLGLGARYIFTMGVGRLLRAITFVSTILPSARPWCASARFNNVPSQPHRWAQKYYVPYANDPAAIRKLLHWDAAYADPGSYIGDYRADWGSMSFLSEFLRPSYSEGSSWFALLKKAGGGCNDLMYSGHMLVAVLTAMAWTEAYGGFSSAMIWLFVAHSAQREIRERHHYTVDCIVAIYVGILLWKMTGFIWSAERKTKQTKLEKIQNSLIHAAKDGDIETVRRLVEEIEVSSRVEKQSKVISNRTMTVFACATVITTLTIVILALTLTSDG</sequence>
<gene>
    <name evidence="3" type="primary">PLM</name>
    <name evidence="5" type="ordered locus">At1g43580</name>
    <name evidence="6" type="ORF">T10P12.6</name>
</gene>
<protein>
    <recommendedName>
        <fullName evidence="3">Protein PHLOEM UNLOADING MODULATOR</fullName>
        <ecNumber evidence="2">2.7.8.-</ecNumber>
    </recommendedName>
</protein>
<comment type="function">
    <text evidence="2">Catalyzes the biosynthesis of sphingolipids with very long-chain fatty acid (VLCFA) (PubMed:31182845). Required for the formation of plasmodesmal cytoplasmic sleeve during the transition from type I to type II plasmodesmata to modulate post-sieve elements (SE) unloading and symplastic cell-to-cell molecular trafficking at the phloem pole pericycle (PPP)-endodermis interface in roots (PubMed:31182845).</text>
</comment>
<comment type="pathway">
    <text evidence="2">Sphingolipid metabolism.</text>
</comment>
<comment type="subcellular location">
    <subcellularLocation>
        <location evidence="1">Membrane</location>
        <topology evidence="1">Multi-pass membrane protein</topology>
    </subcellularLocation>
</comment>
<comment type="alternative products">
    <event type="alternative splicing"/>
    <isoform>
        <id>Q9XIG2-1</id>
        <name>1</name>
        <sequence type="displayed"/>
    </isoform>
    <isoform>
        <id>Q9XIG2-2</id>
        <name>2</name>
        <sequence type="described" ref="VSP_060914"/>
    </isoform>
</comment>
<comment type="disruption phenotype">
    <text evidence="2">Enhanced plasmodesmata-mediated symplastic transport through the phloem pole pericycle (PPP)-endodermis interface due to a defect in the formation of the endoplasmic reticulum (ER)-plasma membrane tethers during plasmodesmal morphogenesis and associated with pores lacking cytoplasmic sleeve.</text>
</comment>
<comment type="similarity">
    <text evidence="4">Belongs to the sphingomyelin synthase family.</text>
</comment>
<name>PLM_ARATH</name>